<accession>Q5SI28</accession>
<comment type="function">
    <text evidence="1">Catalyzes the synthesis of GMP from XMP.</text>
</comment>
<comment type="catalytic activity">
    <reaction evidence="1">
        <text>XMP + L-glutamine + ATP + H2O = GMP + L-glutamate + AMP + diphosphate + 2 H(+)</text>
        <dbReference type="Rhea" id="RHEA:11680"/>
        <dbReference type="ChEBI" id="CHEBI:15377"/>
        <dbReference type="ChEBI" id="CHEBI:15378"/>
        <dbReference type="ChEBI" id="CHEBI:29985"/>
        <dbReference type="ChEBI" id="CHEBI:30616"/>
        <dbReference type="ChEBI" id="CHEBI:33019"/>
        <dbReference type="ChEBI" id="CHEBI:57464"/>
        <dbReference type="ChEBI" id="CHEBI:58115"/>
        <dbReference type="ChEBI" id="CHEBI:58359"/>
        <dbReference type="ChEBI" id="CHEBI:456215"/>
        <dbReference type="EC" id="6.3.5.2"/>
    </reaction>
</comment>
<comment type="pathway">
    <text evidence="1">Purine metabolism; GMP biosynthesis; GMP from XMP (L-Gln route): step 1/1.</text>
</comment>
<comment type="subunit">
    <text evidence="1">Homodimer.</text>
</comment>
<gene>
    <name evidence="1" type="primary">guaA</name>
    <name type="ordered locus">TTHA1552</name>
</gene>
<protein>
    <recommendedName>
        <fullName evidence="1">GMP synthase [glutamine-hydrolyzing]</fullName>
        <ecNumber evidence="1">6.3.5.2</ecNumber>
    </recommendedName>
    <alternativeName>
        <fullName evidence="1">GMP synthetase</fullName>
    </alternativeName>
    <alternativeName>
        <fullName evidence="1">Glutamine amidotransferase</fullName>
    </alternativeName>
</protein>
<dbReference type="EC" id="6.3.5.2" evidence="1"/>
<dbReference type="EMBL" id="AP008226">
    <property type="protein sequence ID" value="BAD71375.1"/>
    <property type="molecule type" value="Genomic_DNA"/>
</dbReference>
<dbReference type="RefSeq" id="WP_011228757.1">
    <property type="nucleotide sequence ID" value="NC_006461.1"/>
</dbReference>
<dbReference type="RefSeq" id="YP_144818.1">
    <property type="nucleotide sequence ID" value="NC_006461.1"/>
</dbReference>
<dbReference type="PDB" id="2YWB">
    <property type="method" value="X-ray"/>
    <property type="resolution" value="2.10 A"/>
    <property type="chains" value="A/B/C/D=1-503"/>
</dbReference>
<dbReference type="PDB" id="2YWC">
    <property type="method" value="X-ray"/>
    <property type="resolution" value="2.20 A"/>
    <property type="chains" value="A/B/C/D=1-503"/>
</dbReference>
<dbReference type="PDBsum" id="2YWB"/>
<dbReference type="PDBsum" id="2YWC"/>
<dbReference type="SMR" id="Q5SI28"/>
<dbReference type="MEROPS" id="C26.A07"/>
<dbReference type="EnsemblBacteria" id="BAD71375">
    <property type="protein sequence ID" value="BAD71375"/>
    <property type="gene ID" value="BAD71375"/>
</dbReference>
<dbReference type="GeneID" id="3168703"/>
<dbReference type="KEGG" id="ttj:TTHA1552"/>
<dbReference type="PATRIC" id="fig|300852.9.peg.1523"/>
<dbReference type="eggNOG" id="COG0518">
    <property type="taxonomic scope" value="Bacteria"/>
</dbReference>
<dbReference type="eggNOG" id="COG0519">
    <property type="taxonomic scope" value="Bacteria"/>
</dbReference>
<dbReference type="HOGENOM" id="CLU_014340_0_5_0"/>
<dbReference type="PhylomeDB" id="Q5SI28"/>
<dbReference type="UniPathway" id="UPA00189">
    <property type="reaction ID" value="UER00296"/>
</dbReference>
<dbReference type="EvolutionaryTrace" id="Q5SI28"/>
<dbReference type="Proteomes" id="UP000000532">
    <property type="component" value="Chromosome"/>
</dbReference>
<dbReference type="GO" id="GO:0005829">
    <property type="term" value="C:cytosol"/>
    <property type="evidence" value="ECO:0007669"/>
    <property type="project" value="TreeGrafter"/>
</dbReference>
<dbReference type="GO" id="GO:0005524">
    <property type="term" value="F:ATP binding"/>
    <property type="evidence" value="ECO:0007669"/>
    <property type="project" value="UniProtKB-UniRule"/>
</dbReference>
<dbReference type="GO" id="GO:0003921">
    <property type="term" value="F:GMP synthase activity"/>
    <property type="evidence" value="ECO:0007669"/>
    <property type="project" value="InterPro"/>
</dbReference>
<dbReference type="CDD" id="cd01742">
    <property type="entry name" value="GATase1_GMP_Synthase"/>
    <property type="match status" value="1"/>
</dbReference>
<dbReference type="CDD" id="cd01997">
    <property type="entry name" value="GMP_synthase_C"/>
    <property type="match status" value="1"/>
</dbReference>
<dbReference type="FunFam" id="3.30.300.10:FF:000002">
    <property type="entry name" value="GMP synthase [glutamine-hydrolyzing]"/>
    <property type="match status" value="1"/>
</dbReference>
<dbReference type="FunFam" id="3.40.50.880:FF:000001">
    <property type="entry name" value="GMP synthase [glutamine-hydrolyzing]"/>
    <property type="match status" value="1"/>
</dbReference>
<dbReference type="Gene3D" id="3.30.300.10">
    <property type="match status" value="1"/>
</dbReference>
<dbReference type="Gene3D" id="3.40.50.880">
    <property type="match status" value="1"/>
</dbReference>
<dbReference type="Gene3D" id="3.40.50.620">
    <property type="entry name" value="HUPs"/>
    <property type="match status" value="1"/>
</dbReference>
<dbReference type="HAMAP" id="MF_00344">
    <property type="entry name" value="GMP_synthase"/>
    <property type="match status" value="1"/>
</dbReference>
<dbReference type="InterPro" id="IPR029062">
    <property type="entry name" value="Class_I_gatase-like"/>
</dbReference>
<dbReference type="InterPro" id="IPR017926">
    <property type="entry name" value="GATASE"/>
</dbReference>
<dbReference type="InterPro" id="IPR001674">
    <property type="entry name" value="GMP_synth_C"/>
</dbReference>
<dbReference type="InterPro" id="IPR004739">
    <property type="entry name" value="GMP_synth_GATase"/>
</dbReference>
<dbReference type="InterPro" id="IPR022955">
    <property type="entry name" value="GMP_synthase"/>
</dbReference>
<dbReference type="InterPro" id="IPR025777">
    <property type="entry name" value="GMPS_ATP_PPase_dom"/>
</dbReference>
<dbReference type="InterPro" id="IPR014729">
    <property type="entry name" value="Rossmann-like_a/b/a_fold"/>
</dbReference>
<dbReference type="NCBIfam" id="TIGR00884">
    <property type="entry name" value="guaA_Cterm"/>
    <property type="match status" value="1"/>
</dbReference>
<dbReference type="NCBIfam" id="TIGR00888">
    <property type="entry name" value="guaA_Nterm"/>
    <property type="match status" value="1"/>
</dbReference>
<dbReference type="NCBIfam" id="NF000848">
    <property type="entry name" value="PRK00074.1"/>
    <property type="match status" value="1"/>
</dbReference>
<dbReference type="PANTHER" id="PTHR11922:SF2">
    <property type="entry name" value="GMP SYNTHASE [GLUTAMINE-HYDROLYZING]"/>
    <property type="match status" value="1"/>
</dbReference>
<dbReference type="PANTHER" id="PTHR11922">
    <property type="entry name" value="GMP SYNTHASE-RELATED"/>
    <property type="match status" value="1"/>
</dbReference>
<dbReference type="Pfam" id="PF00117">
    <property type="entry name" value="GATase"/>
    <property type="match status" value="1"/>
</dbReference>
<dbReference type="Pfam" id="PF00958">
    <property type="entry name" value="GMP_synt_C"/>
    <property type="match status" value="1"/>
</dbReference>
<dbReference type="PRINTS" id="PR00097">
    <property type="entry name" value="ANTSNTHASEII"/>
</dbReference>
<dbReference type="PRINTS" id="PR00096">
    <property type="entry name" value="GATASE"/>
</dbReference>
<dbReference type="SUPFAM" id="SSF52402">
    <property type="entry name" value="Adenine nucleotide alpha hydrolases-like"/>
    <property type="match status" value="1"/>
</dbReference>
<dbReference type="SUPFAM" id="SSF52317">
    <property type="entry name" value="Class I glutamine amidotransferase-like"/>
    <property type="match status" value="1"/>
</dbReference>
<dbReference type="SUPFAM" id="SSF54810">
    <property type="entry name" value="GMP synthetase C-terminal dimerisation domain"/>
    <property type="match status" value="1"/>
</dbReference>
<dbReference type="PROSITE" id="PS51273">
    <property type="entry name" value="GATASE_TYPE_1"/>
    <property type="match status" value="1"/>
</dbReference>
<dbReference type="PROSITE" id="PS51553">
    <property type="entry name" value="GMPS_ATP_PPASE"/>
    <property type="match status" value="1"/>
</dbReference>
<keyword id="KW-0002">3D-structure</keyword>
<keyword id="KW-0067">ATP-binding</keyword>
<keyword id="KW-0315">Glutamine amidotransferase</keyword>
<keyword id="KW-0332">GMP biosynthesis</keyword>
<keyword id="KW-0436">Ligase</keyword>
<keyword id="KW-0547">Nucleotide-binding</keyword>
<keyword id="KW-0658">Purine biosynthesis</keyword>
<keyword id="KW-1185">Reference proteome</keyword>
<sequence length="503" mass="55817">MVLVLDFGSQYTRLIARRLRELRAFSLILPGDAPLEEVLKHRPQALILSGGPRSVFDPDAPRPDPRLFSSGLPLLGICYGMQLLAQELGGRVERAGRAEYGKALLTRHEGPLFRGLEGEVQVWMSHQDAVTAPPPGWRVVAETEENPVAAIASPDGRAYGVQFHPEVAHTPKGMQILENFLELAGVKRDWTPEHVLEELLREVRERAGKDRVLLAVSGGVDSSTLALLLAKAGVDHLAVFVDHGLLRLGEREEVEGALRALGVNLLVVDAKERFLKALKGVEDPEEKRKIIGREFVAAFSQVARERGPFRFLAQGTLYPDVIESAGGHGAAKIKSHHNVGGLPEDLEFELLEPFRLLFKDEVRELALLLGLPDTLRLRHPFPGPGLAVRVLGEVTEERLEILRRADDIFTSLLREWGLYEKVAQALAVLTPVRSVGVAGDERKYGYVLALRAVTTEDFMTADWARLPLEFLDEAARRITRRVPEIGRVVYDLTSKPPATIEWE</sequence>
<reference key="1">
    <citation type="submission" date="2004-11" db="EMBL/GenBank/DDBJ databases">
        <title>Complete genome sequence of Thermus thermophilus HB8.</title>
        <authorList>
            <person name="Masui R."/>
            <person name="Kurokawa K."/>
            <person name="Nakagawa N."/>
            <person name="Tokunaga F."/>
            <person name="Koyama Y."/>
            <person name="Shibata T."/>
            <person name="Oshima T."/>
            <person name="Yokoyama S."/>
            <person name="Yasunaga T."/>
            <person name="Kuramitsu S."/>
        </authorList>
    </citation>
    <scope>NUCLEOTIDE SEQUENCE [LARGE SCALE GENOMIC DNA]</scope>
    <source>
        <strain>ATCC 27634 / DSM 579 / HB8</strain>
    </source>
</reference>
<organism>
    <name type="scientific">Thermus thermophilus (strain ATCC 27634 / DSM 579 / HB8)</name>
    <dbReference type="NCBI Taxonomy" id="300852"/>
    <lineage>
        <taxon>Bacteria</taxon>
        <taxon>Thermotogati</taxon>
        <taxon>Deinococcota</taxon>
        <taxon>Deinococci</taxon>
        <taxon>Thermales</taxon>
        <taxon>Thermaceae</taxon>
        <taxon>Thermus</taxon>
    </lineage>
</organism>
<feature type="chain" id="PRO_0000229481" description="GMP synthase [glutamine-hydrolyzing]">
    <location>
        <begin position="1"/>
        <end position="503"/>
    </location>
</feature>
<feature type="domain" description="Glutamine amidotransferase type-1" evidence="1">
    <location>
        <begin position="1"/>
        <end position="189"/>
    </location>
</feature>
<feature type="domain" description="GMPS ATP-PPase" evidence="1">
    <location>
        <begin position="190"/>
        <end position="378"/>
    </location>
</feature>
<feature type="active site" description="Nucleophile" evidence="1">
    <location>
        <position position="78"/>
    </location>
</feature>
<feature type="active site" evidence="1">
    <location>
        <position position="164"/>
    </location>
</feature>
<feature type="active site" evidence="1">
    <location>
        <position position="166"/>
    </location>
</feature>
<feature type="binding site" evidence="1">
    <location>
        <begin position="217"/>
        <end position="223"/>
    </location>
    <ligand>
        <name>ATP</name>
        <dbReference type="ChEBI" id="CHEBI:30616"/>
    </ligand>
</feature>
<feature type="strand" evidence="2">
    <location>
        <begin position="2"/>
        <end position="8"/>
    </location>
</feature>
<feature type="helix" evidence="2">
    <location>
        <begin position="12"/>
        <end position="20"/>
    </location>
</feature>
<feature type="turn" evidence="2">
    <location>
        <begin position="21"/>
        <end position="23"/>
    </location>
</feature>
<feature type="strand" evidence="2">
    <location>
        <begin position="26"/>
        <end position="30"/>
    </location>
</feature>
<feature type="helix" evidence="2">
    <location>
        <begin position="35"/>
        <end position="39"/>
    </location>
</feature>
<feature type="strand" evidence="2">
    <location>
        <begin position="44"/>
        <end position="48"/>
    </location>
</feature>
<feature type="helix" evidence="2">
    <location>
        <begin position="65"/>
        <end position="68"/>
    </location>
</feature>
<feature type="strand" evidence="2">
    <location>
        <begin position="74"/>
        <end position="77"/>
    </location>
</feature>
<feature type="helix" evidence="2">
    <location>
        <begin position="79"/>
        <end position="86"/>
    </location>
</feature>
<feature type="turn" evidence="2">
    <location>
        <begin position="87"/>
        <end position="89"/>
    </location>
</feature>
<feature type="strand" evidence="2">
    <location>
        <begin position="91"/>
        <end position="93"/>
    </location>
</feature>
<feature type="strand" evidence="2">
    <location>
        <begin position="100"/>
        <end position="104"/>
    </location>
</feature>
<feature type="strand" evidence="2">
    <location>
        <begin position="106"/>
        <end position="108"/>
    </location>
</feature>
<feature type="helix" evidence="2">
    <location>
        <begin position="111"/>
        <end position="113"/>
    </location>
</feature>
<feature type="strand" evidence="2">
    <location>
        <begin position="121"/>
        <end position="125"/>
    </location>
</feature>
<feature type="strand" evidence="2">
    <location>
        <begin position="129"/>
        <end position="132"/>
    </location>
</feature>
<feature type="strand" evidence="2">
    <location>
        <begin position="138"/>
        <end position="142"/>
    </location>
</feature>
<feature type="strand" evidence="2">
    <location>
        <begin position="149"/>
        <end position="152"/>
    </location>
</feature>
<feature type="strand" evidence="2">
    <location>
        <begin position="156"/>
        <end position="163"/>
    </location>
</feature>
<feature type="helix" evidence="2">
    <location>
        <begin position="173"/>
        <end position="183"/>
    </location>
</feature>
<feature type="helix" evidence="2">
    <location>
        <begin position="192"/>
        <end position="207"/>
    </location>
</feature>
<feature type="strand" evidence="2">
    <location>
        <begin position="210"/>
        <end position="216"/>
    </location>
</feature>
<feature type="helix" evidence="2">
    <location>
        <begin position="220"/>
        <end position="232"/>
    </location>
</feature>
<feature type="strand" evidence="2">
    <location>
        <begin position="235"/>
        <end position="242"/>
    </location>
</feature>
<feature type="helix" evidence="2">
    <location>
        <begin position="250"/>
        <end position="260"/>
    </location>
</feature>
<feature type="strand" evidence="2">
    <location>
        <begin position="265"/>
        <end position="269"/>
    </location>
</feature>
<feature type="helix" evidence="2">
    <location>
        <begin position="271"/>
        <end position="278"/>
    </location>
</feature>
<feature type="helix" evidence="2">
    <location>
        <begin position="284"/>
        <end position="306"/>
    </location>
</feature>
<feature type="strand" evidence="2">
    <location>
        <begin position="310"/>
        <end position="313"/>
    </location>
</feature>
<feature type="helix" evidence="2">
    <location>
        <begin position="318"/>
        <end position="322"/>
    </location>
</feature>
<feature type="strand" evidence="2">
    <location>
        <begin position="349"/>
        <end position="351"/>
    </location>
</feature>
<feature type="turn" evidence="2">
    <location>
        <begin position="353"/>
        <end position="356"/>
    </location>
</feature>
<feature type="helix" evidence="2">
    <location>
        <begin position="359"/>
        <end position="368"/>
    </location>
</feature>
<feature type="helix" evidence="2">
    <location>
        <begin position="373"/>
        <end position="376"/>
    </location>
</feature>
<feature type="helix" evidence="2">
    <location>
        <begin position="385"/>
        <end position="389"/>
    </location>
</feature>
<feature type="strand" evidence="2">
    <location>
        <begin position="390"/>
        <end position="392"/>
    </location>
</feature>
<feature type="helix" evidence="2">
    <location>
        <begin position="396"/>
        <end position="415"/>
    </location>
</feature>
<feature type="helix" evidence="2">
    <location>
        <begin position="419"/>
        <end position="421"/>
    </location>
</feature>
<feature type="strand" evidence="2">
    <location>
        <begin position="422"/>
        <end position="431"/>
    </location>
</feature>
<feature type="strand" evidence="2">
    <location>
        <begin position="446"/>
        <end position="454"/>
    </location>
</feature>
<feature type="strand" evidence="2">
    <location>
        <begin position="456"/>
        <end position="459"/>
    </location>
</feature>
<feature type="strand" evidence="2">
    <location>
        <begin position="461"/>
        <end position="463"/>
    </location>
</feature>
<feature type="helix" evidence="2">
    <location>
        <begin position="468"/>
        <end position="481"/>
    </location>
</feature>
<feature type="strand" evidence="2">
    <location>
        <begin position="487"/>
        <end position="491"/>
    </location>
</feature>
<name>GUAA_THET8</name>
<evidence type="ECO:0000255" key="1">
    <source>
        <dbReference type="HAMAP-Rule" id="MF_00344"/>
    </source>
</evidence>
<evidence type="ECO:0007829" key="2">
    <source>
        <dbReference type="PDB" id="2YWB"/>
    </source>
</evidence>
<proteinExistence type="evidence at protein level"/>